<comment type="function">
    <text evidence="1 2 3 4">Acts as a gating modifier on both Kv and Nav ion channels. Voltage-dependently inhibits voltage-gated potassium channels Kv3 (Kv3.1/KCNC1, Kv3.2/KCNC2 and Kv3.4/KCNC4) (PubMed:16177043, PubMed:9506974). Slows inactivation of the voltage-gated sodium channel Nav1.7/SCN9A (By similarity). Inhibits all Kv3.1, Kv3.2 and Kv3.4 by about 50% when tested at a voltage of +40 mV (PubMed:16177043). May act by binding residues in voltage-sensing domains S3b and S4 of Kv3 (PubMed:16177043). Tests have been done on human Nav1.7/SCN9A and rat SCG neurons that mostly carry Nav1.7 channels (EC(50)=300 nM) (By similarity). This toxin also reduces blood pressure (Ref.1).</text>
</comment>
<comment type="subcellular location">
    <subcellularLocation>
        <location evidence="7">Secreted</location>
    </subcellularLocation>
    <subcellularLocation>
        <location evidence="7">Nematocyst</location>
    </subcellularLocation>
</comment>
<comment type="similarity">
    <text evidence="7">Belongs to the sea anemone type 3 (BDS) potassium channel toxin family.</text>
</comment>
<comment type="caution">
    <text evidence="7">Opinions are divided on whether Anemonia viridis (Forsskal, 1775) and Anemonia sulcata (Pennant, 1777) are separate species.</text>
</comment>
<keyword id="KW-0903">Direct protein sequencing</keyword>
<keyword id="KW-1015">Disulfide bond</keyword>
<keyword id="KW-0872">Ion channel impairing toxin</keyword>
<keyword id="KW-0166">Nematocyst</keyword>
<keyword id="KW-0528">Neurotoxin</keyword>
<keyword id="KW-0632">Potassium channel impairing toxin</keyword>
<keyword id="KW-0964">Secreted</keyword>
<keyword id="KW-0800">Toxin</keyword>
<keyword id="KW-1220">Voltage-gated potassium channel impairing toxin</keyword>
<name>BDS2_ANESU</name>
<proteinExistence type="evidence at protein level"/>
<dbReference type="SMR" id="P59084"/>
<dbReference type="GO" id="GO:0005576">
    <property type="term" value="C:extracellular region"/>
    <property type="evidence" value="ECO:0007669"/>
    <property type="project" value="UniProtKB-SubCell"/>
</dbReference>
<dbReference type="GO" id="GO:0042151">
    <property type="term" value="C:nematocyst"/>
    <property type="evidence" value="ECO:0007669"/>
    <property type="project" value="UniProtKB-SubCell"/>
</dbReference>
<dbReference type="GO" id="GO:0008200">
    <property type="term" value="F:ion channel inhibitor activity"/>
    <property type="evidence" value="ECO:0007669"/>
    <property type="project" value="InterPro"/>
</dbReference>
<dbReference type="GO" id="GO:0015459">
    <property type="term" value="F:potassium channel regulator activity"/>
    <property type="evidence" value="ECO:0007669"/>
    <property type="project" value="UniProtKB-KW"/>
</dbReference>
<dbReference type="GO" id="GO:0090729">
    <property type="term" value="F:toxin activity"/>
    <property type="evidence" value="ECO:0007669"/>
    <property type="project" value="UniProtKB-KW"/>
</dbReference>
<dbReference type="Gene3D" id="2.20.20.10">
    <property type="entry name" value="Anthopleurin-A"/>
    <property type="match status" value="1"/>
</dbReference>
<dbReference type="InterPro" id="IPR012414">
    <property type="entry name" value="BDS_K_chnl_tox"/>
</dbReference>
<dbReference type="InterPro" id="IPR023355">
    <property type="entry name" value="Myo_ane_neurotoxin_sf"/>
</dbReference>
<dbReference type="Pfam" id="PF07936">
    <property type="entry name" value="Defensin_4"/>
    <property type="match status" value="1"/>
</dbReference>
<dbReference type="SUPFAM" id="SSF57392">
    <property type="entry name" value="Defensin-like"/>
    <property type="match status" value="1"/>
</dbReference>
<organism>
    <name type="scientific">Anemonia sulcata</name>
    <name type="common">Mediterranean snakelocks sea anemone</name>
    <dbReference type="NCBI Taxonomy" id="6108"/>
    <lineage>
        <taxon>Eukaryota</taxon>
        <taxon>Metazoa</taxon>
        <taxon>Cnidaria</taxon>
        <taxon>Anthozoa</taxon>
        <taxon>Hexacorallia</taxon>
        <taxon>Actiniaria</taxon>
        <taxon>Actiniidae</taxon>
        <taxon>Anemonia</taxon>
    </lineage>
</organism>
<feature type="chain" id="PRO_0000221542" description="DeltaKappa-actitoxin-Avd4b" evidence="3 4">
    <location>
        <begin position="1"/>
        <end position="43"/>
    </location>
</feature>
<feature type="disulfide bond" evidence="1">
    <location>
        <begin position="4"/>
        <end position="39"/>
    </location>
</feature>
<feature type="disulfide bond" evidence="1">
    <location>
        <begin position="6"/>
        <end position="32"/>
    </location>
</feature>
<feature type="disulfide bond" evidence="1">
    <location>
        <begin position="22"/>
        <end position="40"/>
    </location>
</feature>
<reference key="1">
    <citation type="patent" date="1985-01-17" number="DE3324689">
        <title>Polypeptides, process for their preparation, and their use as hypotensive active compounds.</title>
        <authorList>
            <person name="Beress L."/>
            <person name="Doppelfeld I.-S."/>
            <person name="Etschenberg E."/>
            <person name="Graf E."/>
            <person name="Henschen-Edman A."/>
            <person name="Zwick J."/>
        </authorList>
    </citation>
    <scope>PROTEIN SEQUENCE</scope>
    <scope>FUNCTION</scope>
</reference>
<reference key="2">
    <citation type="journal article" date="1998" name="J. Biol. Chem.">
        <title>Sea anemone peptides with a specific blocking activity against the fast inactivating potassium channel Kv3.4.</title>
        <authorList>
            <person name="Diochot S."/>
            <person name="Schweitz H."/>
            <person name="Beress L."/>
            <person name="Lazdunski M."/>
        </authorList>
    </citation>
    <scope>PROTEIN SEQUENCE</scope>
    <scope>FUNCTION</scope>
</reference>
<reference key="3">
    <citation type="journal article" date="2005" name="J. Neurosci.">
        <title>Modulation of Kv3 subfamily potassium currents by the sea anemone toxin BDS: significance for CNS and biophysical studies.</title>
        <authorList>
            <person name="Yeung S.Y."/>
            <person name="Thompson D."/>
            <person name="Wang Z."/>
            <person name="Fedida D."/>
            <person name="Robertson B."/>
        </authorList>
    </citation>
    <scope>FUNCTION</scope>
</reference>
<reference key="4">
    <citation type="journal article" date="2012" name="Toxicon">
        <title>Development of a rational nomenclature for naming peptide and protein toxins from sea anemones.</title>
        <authorList>
            <person name="Oliveira J.S."/>
            <person name="Fuentes-Silva D."/>
            <person name="King G.F."/>
        </authorList>
    </citation>
    <scope>NOMENCLATURE</scope>
</reference>
<evidence type="ECO:0000250" key="1">
    <source>
        <dbReference type="UniProtKB" id="P11494"/>
    </source>
</evidence>
<evidence type="ECO:0000269" key="2">
    <source>
    </source>
</evidence>
<evidence type="ECO:0000269" key="3">
    <source>
    </source>
</evidence>
<evidence type="ECO:0000269" key="4">
    <source ref="1"/>
</evidence>
<evidence type="ECO:0000303" key="5">
    <source>
    </source>
</evidence>
<evidence type="ECO:0000303" key="6">
    <source>
    </source>
</evidence>
<evidence type="ECO:0000305" key="7"/>
<protein>
    <recommendedName>
        <fullName evidence="5">DeltaKappa-actitoxin-Avd4b</fullName>
        <shortName evidence="5">DeltaKappa-AITX-Avd4b</shortName>
    </recommendedName>
    <alternativeName>
        <fullName>Antihypertensive protein BDS-2</fullName>
    </alternativeName>
    <alternativeName>
        <fullName evidence="6">Blood depressing substance II</fullName>
        <shortName evidence="6">BDS-II</shortName>
    </alternativeName>
</protein>
<sequence>AAPCFCPGKPDRGDLWILRGTCPGGYGYTSNCYKWPNICCYPH</sequence>
<accession>P59084</accession>